<reference key="1">
    <citation type="journal article" date="1992" name="Biochem. J.">
        <title>Molecular cloning of higher-plant 3-oxoacyl-(acyl carrier protein) reductase. Sequence identities with the nodG-gene product of the nitrogen-fixing soil bacterium Rhizobium meliloti.</title>
        <authorList>
            <person name="Slabas A.R."/>
            <person name="Chase D."/>
            <person name="Nishida I."/>
            <person name="Murata N."/>
            <person name="Sidebottom C.M."/>
            <person name="Safford R."/>
            <person name="Sheldon P.S."/>
            <person name="Kekwick R.G.O."/>
            <person name="Hardie D.G."/>
            <person name="Mackintosh R.W."/>
        </authorList>
    </citation>
    <scope>NUCLEOTIDE SEQUENCE [MRNA]</scope>
    <source>
        <tissue>Leaf</tissue>
    </source>
</reference>
<reference key="2">
    <citation type="journal article" date="2000" name="Nature">
        <title>Sequence and analysis of chromosome 1 of the plant Arabidopsis thaliana.</title>
        <authorList>
            <person name="Theologis A."/>
            <person name="Ecker J.R."/>
            <person name="Palm C.J."/>
            <person name="Federspiel N.A."/>
            <person name="Kaul S."/>
            <person name="White O."/>
            <person name="Alonso J."/>
            <person name="Altafi H."/>
            <person name="Araujo R."/>
            <person name="Bowman C.L."/>
            <person name="Brooks S.Y."/>
            <person name="Buehler E."/>
            <person name="Chan A."/>
            <person name="Chao Q."/>
            <person name="Chen H."/>
            <person name="Cheuk R.F."/>
            <person name="Chin C.W."/>
            <person name="Chung M.K."/>
            <person name="Conn L."/>
            <person name="Conway A.B."/>
            <person name="Conway A.R."/>
            <person name="Creasy T.H."/>
            <person name="Dewar K."/>
            <person name="Dunn P."/>
            <person name="Etgu P."/>
            <person name="Feldblyum T.V."/>
            <person name="Feng J.-D."/>
            <person name="Fong B."/>
            <person name="Fujii C.Y."/>
            <person name="Gill J.E."/>
            <person name="Goldsmith A.D."/>
            <person name="Haas B."/>
            <person name="Hansen N.F."/>
            <person name="Hughes B."/>
            <person name="Huizar L."/>
            <person name="Hunter J.L."/>
            <person name="Jenkins J."/>
            <person name="Johnson-Hopson C."/>
            <person name="Khan S."/>
            <person name="Khaykin E."/>
            <person name="Kim C.J."/>
            <person name="Koo H.L."/>
            <person name="Kremenetskaia I."/>
            <person name="Kurtz D.B."/>
            <person name="Kwan A."/>
            <person name="Lam B."/>
            <person name="Langin-Hooper S."/>
            <person name="Lee A."/>
            <person name="Lee J.M."/>
            <person name="Lenz C.A."/>
            <person name="Li J.H."/>
            <person name="Li Y.-P."/>
            <person name="Lin X."/>
            <person name="Liu S.X."/>
            <person name="Liu Z.A."/>
            <person name="Luros J.S."/>
            <person name="Maiti R."/>
            <person name="Marziali A."/>
            <person name="Militscher J."/>
            <person name="Miranda M."/>
            <person name="Nguyen M."/>
            <person name="Nierman W.C."/>
            <person name="Osborne B.I."/>
            <person name="Pai G."/>
            <person name="Peterson J."/>
            <person name="Pham P.K."/>
            <person name="Rizzo M."/>
            <person name="Rooney T."/>
            <person name="Rowley D."/>
            <person name="Sakano H."/>
            <person name="Salzberg S.L."/>
            <person name="Schwartz J.R."/>
            <person name="Shinn P."/>
            <person name="Southwick A.M."/>
            <person name="Sun H."/>
            <person name="Tallon L.J."/>
            <person name="Tambunga G."/>
            <person name="Toriumi M.J."/>
            <person name="Town C.D."/>
            <person name="Utterback T."/>
            <person name="Van Aken S."/>
            <person name="Vaysberg M."/>
            <person name="Vysotskaia V.S."/>
            <person name="Walker M."/>
            <person name="Wu D."/>
            <person name="Yu G."/>
            <person name="Fraser C.M."/>
            <person name="Venter J.C."/>
            <person name="Davis R.W."/>
        </authorList>
    </citation>
    <scope>NUCLEOTIDE SEQUENCE [LARGE SCALE GENOMIC DNA]</scope>
    <source>
        <strain>cv. Columbia</strain>
    </source>
</reference>
<reference key="3">
    <citation type="journal article" date="2017" name="Plant J.">
        <title>Araport11: a complete reannotation of the Arabidopsis thaliana reference genome.</title>
        <authorList>
            <person name="Cheng C.Y."/>
            <person name="Krishnakumar V."/>
            <person name="Chan A.P."/>
            <person name="Thibaud-Nissen F."/>
            <person name="Schobel S."/>
            <person name="Town C.D."/>
        </authorList>
    </citation>
    <scope>GENOME REANNOTATION</scope>
    <source>
        <strain>cv. Columbia</strain>
    </source>
</reference>
<reference key="4">
    <citation type="journal article" date="2003" name="Science">
        <title>Empirical analysis of transcriptional activity in the Arabidopsis genome.</title>
        <authorList>
            <person name="Yamada K."/>
            <person name="Lim J."/>
            <person name="Dale J.M."/>
            <person name="Chen H."/>
            <person name="Shinn P."/>
            <person name="Palm C.J."/>
            <person name="Southwick A.M."/>
            <person name="Wu H.C."/>
            <person name="Kim C.J."/>
            <person name="Nguyen M."/>
            <person name="Pham P.K."/>
            <person name="Cheuk R.F."/>
            <person name="Karlin-Newmann G."/>
            <person name="Liu S.X."/>
            <person name="Lam B."/>
            <person name="Sakano H."/>
            <person name="Wu T."/>
            <person name="Yu G."/>
            <person name="Miranda M."/>
            <person name="Quach H.L."/>
            <person name="Tripp M."/>
            <person name="Chang C.H."/>
            <person name="Lee J.M."/>
            <person name="Toriumi M.J."/>
            <person name="Chan M.M."/>
            <person name="Tang C.C."/>
            <person name="Onodera C.S."/>
            <person name="Deng J.M."/>
            <person name="Akiyama K."/>
            <person name="Ansari Y."/>
            <person name="Arakawa T."/>
            <person name="Banh J."/>
            <person name="Banno F."/>
            <person name="Bowser L."/>
            <person name="Brooks S.Y."/>
            <person name="Carninci P."/>
            <person name="Chao Q."/>
            <person name="Choy N."/>
            <person name="Enju A."/>
            <person name="Goldsmith A.D."/>
            <person name="Gurjal M."/>
            <person name="Hansen N.F."/>
            <person name="Hayashizaki Y."/>
            <person name="Johnson-Hopson C."/>
            <person name="Hsuan V.W."/>
            <person name="Iida K."/>
            <person name="Karnes M."/>
            <person name="Khan S."/>
            <person name="Koesema E."/>
            <person name="Ishida J."/>
            <person name="Jiang P.X."/>
            <person name="Jones T."/>
            <person name="Kawai J."/>
            <person name="Kamiya A."/>
            <person name="Meyers C."/>
            <person name="Nakajima M."/>
            <person name="Narusaka M."/>
            <person name="Seki M."/>
            <person name="Sakurai T."/>
            <person name="Satou M."/>
            <person name="Tamse R."/>
            <person name="Vaysberg M."/>
            <person name="Wallender E.K."/>
            <person name="Wong C."/>
            <person name="Yamamura Y."/>
            <person name="Yuan S."/>
            <person name="Shinozaki K."/>
            <person name="Davis R.W."/>
            <person name="Theologis A."/>
            <person name="Ecker J.R."/>
        </authorList>
    </citation>
    <scope>NUCLEOTIDE SEQUENCE [LARGE SCALE MRNA]</scope>
    <source>
        <strain>cv. Columbia</strain>
    </source>
</reference>
<reference key="5">
    <citation type="journal article" date="2012" name="Mol. Cell. Proteomics">
        <title>Comparative large-scale characterisation of plant vs. mammal proteins reveals similar and idiosyncratic N-alpha acetylation features.</title>
        <authorList>
            <person name="Bienvenut W.V."/>
            <person name="Sumpton D."/>
            <person name="Martinez A."/>
            <person name="Lilla S."/>
            <person name="Espagne C."/>
            <person name="Meinnel T."/>
            <person name="Giglione C."/>
        </authorList>
    </citation>
    <scope>ACETYLATION [LARGE SCALE ANALYSIS] AT ALA-58</scope>
    <scope>CLEAVAGE OF TRANSIT PEPTIDE [LARGE SCALE ANALYSIS] AFTER LYS-57</scope>
    <scope>IDENTIFICATION BY MASS SPECTROMETRY [LARGE SCALE ANALYSIS]</scope>
</reference>
<gene>
    <name type="ordered locus">At1g24360</name>
    <name type="ORF">F21J9.2</name>
    <name type="ORF">F3I6.30</name>
</gene>
<name>FABG_ARATH</name>
<feature type="transit peptide" description="Chloroplast" evidence="2 5">
    <location>
        <begin position="1"/>
        <end position="57"/>
    </location>
</feature>
<feature type="chain" id="PRO_0000031976" description="3-oxoacyl-[acyl-carrier-protein] reductase, chloroplastic">
    <location>
        <begin position="58"/>
        <end position="319"/>
    </location>
</feature>
<feature type="active site" description="Proton acceptor" evidence="3">
    <location>
        <position position="226"/>
    </location>
</feature>
<feature type="binding site" evidence="1">
    <location>
        <begin position="81"/>
        <end position="105"/>
    </location>
    <ligand>
        <name>NADP(+)</name>
        <dbReference type="ChEBI" id="CHEBI:58349"/>
    </ligand>
</feature>
<feature type="binding site" evidence="1">
    <location>
        <position position="213"/>
    </location>
    <ligand>
        <name>substrate</name>
    </ligand>
</feature>
<feature type="modified residue" description="N-acetylalanine" evidence="5">
    <location>
        <position position="58"/>
    </location>
</feature>
<feature type="sequence conflict" description="In Ref. 1; CAA45794." evidence="4" ref="1">
    <original>A</original>
    <variation>G</variation>
    <location>
        <position position="17"/>
    </location>
</feature>
<feature type="sequence conflict" description="In Ref. 1; CAA45794." evidence="4" ref="1">
    <original>AAA</original>
    <variation>TAT</variation>
    <location>
        <begin position="227"/>
        <end position="229"/>
    </location>
</feature>
<feature type="sequence conflict" description="In Ref. 1; CAA45794." evidence="4" ref="1">
    <original>KTA</original>
    <variation>ETP</variation>
    <location>
        <begin position="238"/>
        <end position="240"/>
    </location>
</feature>
<dbReference type="EC" id="1.1.1.100"/>
<dbReference type="EMBL" id="X64464">
    <property type="protein sequence ID" value="CAA45794.1"/>
    <property type="molecule type" value="mRNA"/>
</dbReference>
<dbReference type="EMBL" id="AC000103">
    <property type="protein sequence ID" value="AAF97951.1"/>
    <property type="status" value="ALT_SEQ"/>
    <property type="molecule type" value="Genomic_DNA"/>
</dbReference>
<dbReference type="EMBL" id="AC002396">
    <property type="protein sequence ID" value="AAC00590.1"/>
    <property type="status" value="ALT_SEQ"/>
    <property type="molecule type" value="Genomic_DNA"/>
</dbReference>
<dbReference type="EMBL" id="CP002684">
    <property type="protein sequence ID" value="AEE30522.1"/>
    <property type="molecule type" value="Genomic_DNA"/>
</dbReference>
<dbReference type="EMBL" id="AF324985">
    <property type="protein sequence ID" value="AAG40337.1"/>
    <property type="molecule type" value="mRNA"/>
</dbReference>
<dbReference type="EMBL" id="AY059816">
    <property type="protein sequence ID" value="AAL24298.1"/>
    <property type="molecule type" value="mRNA"/>
</dbReference>
<dbReference type="EMBL" id="AY081491">
    <property type="protein sequence ID" value="AAM10053.1"/>
    <property type="molecule type" value="mRNA"/>
</dbReference>
<dbReference type="PIR" id="A86378">
    <property type="entry name" value="A86378"/>
</dbReference>
<dbReference type="PIR" id="S22416">
    <property type="entry name" value="S22416"/>
</dbReference>
<dbReference type="PIR" id="T00667">
    <property type="entry name" value="T00667"/>
</dbReference>
<dbReference type="RefSeq" id="NP_564216.1">
    <property type="nucleotide sequence ID" value="NM_102282.4"/>
</dbReference>
<dbReference type="SMR" id="P33207"/>
<dbReference type="BioGRID" id="24291">
    <property type="interactions" value="16"/>
</dbReference>
<dbReference type="FunCoup" id="P33207">
    <property type="interactions" value="3185"/>
</dbReference>
<dbReference type="STRING" id="3702.P33207"/>
<dbReference type="iPTMnet" id="P33207"/>
<dbReference type="MetOSite" id="P33207"/>
<dbReference type="PaxDb" id="3702-AT1G24360.1"/>
<dbReference type="ProteomicsDB" id="222314"/>
<dbReference type="EnsemblPlants" id="AT1G24360.1">
    <property type="protein sequence ID" value="AT1G24360.1"/>
    <property type="gene ID" value="AT1G24360"/>
</dbReference>
<dbReference type="GeneID" id="839053"/>
<dbReference type="Gramene" id="AT1G24360.1">
    <property type="protein sequence ID" value="AT1G24360.1"/>
    <property type="gene ID" value="AT1G24360"/>
</dbReference>
<dbReference type="KEGG" id="ath:AT1G24360"/>
<dbReference type="Araport" id="AT1G24360"/>
<dbReference type="TAIR" id="AT1G24360"/>
<dbReference type="eggNOG" id="KOG1200">
    <property type="taxonomic scope" value="Eukaryota"/>
</dbReference>
<dbReference type="HOGENOM" id="CLU_010194_1_3_1"/>
<dbReference type="InParanoid" id="P33207"/>
<dbReference type="OMA" id="LFGVQCD"/>
<dbReference type="PhylomeDB" id="P33207"/>
<dbReference type="BioCyc" id="ARA:AT1G24360-MONOMER"/>
<dbReference type="BioCyc" id="MetaCyc:AT1G24360-MONOMER"/>
<dbReference type="UniPathway" id="UPA00094"/>
<dbReference type="CD-CODE" id="4299E36E">
    <property type="entry name" value="Nucleolus"/>
</dbReference>
<dbReference type="PRO" id="PR:P33207"/>
<dbReference type="Proteomes" id="UP000006548">
    <property type="component" value="Chromosome 1"/>
</dbReference>
<dbReference type="ExpressionAtlas" id="P33207">
    <property type="expression patterns" value="baseline and differential"/>
</dbReference>
<dbReference type="GO" id="GO:0009507">
    <property type="term" value="C:chloroplast"/>
    <property type="evidence" value="ECO:0000314"/>
    <property type="project" value="TAIR"/>
</dbReference>
<dbReference type="GO" id="GO:0009941">
    <property type="term" value="C:chloroplast envelope"/>
    <property type="evidence" value="ECO:0007005"/>
    <property type="project" value="TAIR"/>
</dbReference>
<dbReference type="GO" id="GO:0009570">
    <property type="term" value="C:chloroplast stroma"/>
    <property type="evidence" value="ECO:0007005"/>
    <property type="project" value="TAIR"/>
</dbReference>
<dbReference type="GO" id="GO:0005739">
    <property type="term" value="C:mitochondrion"/>
    <property type="evidence" value="ECO:0000314"/>
    <property type="project" value="TAIR"/>
</dbReference>
<dbReference type="GO" id="GO:0005634">
    <property type="term" value="C:nucleus"/>
    <property type="evidence" value="ECO:0007005"/>
    <property type="project" value="TAIR"/>
</dbReference>
<dbReference type="GO" id="GO:0009536">
    <property type="term" value="C:plastid"/>
    <property type="evidence" value="ECO:0007005"/>
    <property type="project" value="TAIR"/>
</dbReference>
<dbReference type="GO" id="GO:0004316">
    <property type="term" value="F:3-oxoacyl-[acyl-carrier-protein] reductase (NADPH) activity"/>
    <property type="evidence" value="ECO:0000316"/>
    <property type="project" value="TAIR"/>
</dbReference>
<dbReference type="GO" id="GO:0005507">
    <property type="term" value="F:copper ion binding"/>
    <property type="evidence" value="ECO:0007005"/>
    <property type="project" value="TAIR"/>
</dbReference>
<dbReference type="GO" id="GO:0051287">
    <property type="term" value="F:NAD binding"/>
    <property type="evidence" value="ECO:0007669"/>
    <property type="project" value="InterPro"/>
</dbReference>
<dbReference type="GO" id="GO:0006633">
    <property type="term" value="P:fatty acid biosynthetic process"/>
    <property type="evidence" value="ECO:0000316"/>
    <property type="project" value="TAIR"/>
</dbReference>
<dbReference type="CDD" id="cd05333">
    <property type="entry name" value="BKR_SDR_c"/>
    <property type="match status" value="1"/>
</dbReference>
<dbReference type="FunFam" id="3.40.50.720:FF:000194">
    <property type="entry name" value="3-oxoacyl-[acyl-carrier-protein] reductase, chloroplastic"/>
    <property type="match status" value="1"/>
</dbReference>
<dbReference type="Gene3D" id="3.40.50.720">
    <property type="entry name" value="NAD(P)-binding Rossmann-like Domain"/>
    <property type="match status" value="1"/>
</dbReference>
<dbReference type="InterPro" id="IPR011284">
    <property type="entry name" value="3oxo_ACP_reduc"/>
</dbReference>
<dbReference type="InterPro" id="IPR036291">
    <property type="entry name" value="NAD(P)-bd_dom_sf"/>
</dbReference>
<dbReference type="InterPro" id="IPR020904">
    <property type="entry name" value="Sc_DH/Rdtase_CS"/>
</dbReference>
<dbReference type="InterPro" id="IPR050259">
    <property type="entry name" value="SDR"/>
</dbReference>
<dbReference type="InterPro" id="IPR002347">
    <property type="entry name" value="SDR_fam"/>
</dbReference>
<dbReference type="NCBIfam" id="TIGR01830">
    <property type="entry name" value="3oxo_ACP_reduc"/>
    <property type="match status" value="1"/>
</dbReference>
<dbReference type="NCBIfam" id="NF005559">
    <property type="entry name" value="PRK07231.1"/>
    <property type="match status" value="1"/>
</dbReference>
<dbReference type="NCBIfam" id="NF009466">
    <property type="entry name" value="PRK12826.1-2"/>
    <property type="match status" value="1"/>
</dbReference>
<dbReference type="PANTHER" id="PTHR42879">
    <property type="entry name" value="3-OXOACYL-(ACYL-CARRIER-PROTEIN) REDUCTASE"/>
    <property type="match status" value="1"/>
</dbReference>
<dbReference type="PANTHER" id="PTHR42879:SF2">
    <property type="entry name" value="3-OXOACYL-[ACYL-CARRIER-PROTEIN] REDUCTASE FABG"/>
    <property type="match status" value="1"/>
</dbReference>
<dbReference type="Pfam" id="PF00106">
    <property type="entry name" value="adh_short"/>
    <property type="match status" value="1"/>
</dbReference>
<dbReference type="PRINTS" id="PR00081">
    <property type="entry name" value="GDHRDH"/>
</dbReference>
<dbReference type="PRINTS" id="PR00080">
    <property type="entry name" value="SDRFAMILY"/>
</dbReference>
<dbReference type="SMART" id="SM00822">
    <property type="entry name" value="PKS_KR"/>
    <property type="match status" value="1"/>
</dbReference>
<dbReference type="SUPFAM" id="SSF51735">
    <property type="entry name" value="NAD(P)-binding Rossmann-fold domains"/>
    <property type="match status" value="1"/>
</dbReference>
<dbReference type="PROSITE" id="PS00061">
    <property type="entry name" value="ADH_SHORT"/>
    <property type="match status" value="1"/>
</dbReference>
<organism>
    <name type="scientific">Arabidopsis thaliana</name>
    <name type="common">Mouse-ear cress</name>
    <dbReference type="NCBI Taxonomy" id="3702"/>
    <lineage>
        <taxon>Eukaryota</taxon>
        <taxon>Viridiplantae</taxon>
        <taxon>Streptophyta</taxon>
        <taxon>Embryophyta</taxon>
        <taxon>Tracheophyta</taxon>
        <taxon>Spermatophyta</taxon>
        <taxon>Magnoliopsida</taxon>
        <taxon>eudicotyledons</taxon>
        <taxon>Gunneridae</taxon>
        <taxon>Pentapetalae</taxon>
        <taxon>rosids</taxon>
        <taxon>malvids</taxon>
        <taxon>Brassicales</taxon>
        <taxon>Brassicaceae</taxon>
        <taxon>Camelineae</taxon>
        <taxon>Arabidopsis</taxon>
    </lineage>
</organism>
<protein>
    <recommendedName>
        <fullName>3-oxoacyl-[acyl-carrier-protein] reductase, chloroplastic</fullName>
        <ecNumber>1.1.1.100</ecNumber>
    </recommendedName>
    <alternativeName>
        <fullName>3-ketoacyl-acyl carrier protein reductase</fullName>
    </alternativeName>
</protein>
<evidence type="ECO:0000250" key="1"/>
<evidence type="ECO:0000255" key="2"/>
<evidence type="ECO:0000255" key="3">
    <source>
        <dbReference type="PROSITE-ProRule" id="PRU10001"/>
    </source>
</evidence>
<evidence type="ECO:0000305" key="4"/>
<evidence type="ECO:0007744" key="5">
    <source>
    </source>
</evidence>
<proteinExistence type="evidence at protein level"/>
<sequence length="319" mass="33548">MAAAVAAPRLISLKAVAKLGFREISQIRQLAPLHSAIPHFGMLRCRSRQPFSTSVVKAQATATEQSPGEVVQKVESPVVVITGASRGIGKAIALALGKAGCKVLVNYARSAKEAEEVAKQIEEYGGQAITFGGDVSKATDVDAMMKTALDKWGTIDVVVNNAGITRDTLLIRMKQSQWDEVIALNLTGVFLCTQAAVKIMMKKKRGRIINISSVVGLIGNIGQANYAAAKGGVISFSKTAAREGASRNINVNVVCPGFIASDMTAELGEDMEKKILGTIPLGRYGKAEEVAGLVEFLALSPAASYITGQAFTIDGGIAI</sequence>
<keyword id="KW-0007">Acetylation</keyword>
<keyword id="KW-0150">Chloroplast</keyword>
<keyword id="KW-0275">Fatty acid biosynthesis</keyword>
<keyword id="KW-0276">Fatty acid metabolism</keyword>
<keyword id="KW-0444">Lipid biosynthesis</keyword>
<keyword id="KW-0443">Lipid metabolism</keyword>
<keyword id="KW-0521">NADP</keyword>
<keyword id="KW-0560">Oxidoreductase</keyword>
<keyword id="KW-0934">Plastid</keyword>
<keyword id="KW-1185">Reference proteome</keyword>
<keyword id="KW-0809">Transit peptide</keyword>
<comment type="catalytic activity">
    <reaction>
        <text>a (3R)-hydroxyacyl-[ACP] + NADP(+) = a 3-oxoacyl-[ACP] + NADPH + H(+)</text>
        <dbReference type="Rhea" id="RHEA:17397"/>
        <dbReference type="Rhea" id="RHEA-COMP:9916"/>
        <dbReference type="Rhea" id="RHEA-COMP:9945"/>
        <dbReference type="ChEBI" id="CHEBI:15378"/>
        <dbReference type="ChEBI" id="CHEBI:57783"/>
        <dbReference type="ChEBI" id="CHEBI:58349"/>
        <dbReference type="ChEBI" id="CHEBI:78776"/>
        <dbReference type="ChEBI" id="CHEBI:78827"/>
        <dbReference type="EC" id="1.1.1.100"/>
    </reaction>
</comment>
<comment type="pathway">
    <text>Lipid metabolism; fatty acid biosynthesis.</text>
</comment>
<comment type="subunit">
    <text evidence="4">Homotetramer.</text>
</comment>
<comment type="subcellular location">
    <subcellularLocation>
        <location>Plastid</location>
        <location>Chloroplast</location>
    </subcellularLocation>
    <subcellularLocation>
        <location>Plastid</location>
    </subcellularLocation>
    <text>And non-photosynthetic plastids.</text>
</comment>
<comment type="similarity">
    <text evidence="4">Belongs to the short-chain dehydrogenases/reductases (SDR) family.</text>
</comment>
<comment type="sequence caution" evidence="4">
    <conflict type="erroneous gene model prediction">
        <sequence resource="EMBL-CDS" id="AAC00590"/>
    </conflict>
</comment>
<comment type="sequence caution" evidence="4">
    <conflict type="erroneous gene model prediction">
        <sequence resource="EMBL-CDS" id="AAF97951"/>
    </conflict>
</comment>
<accession>P33207</accession>
<accession>O04463</accession>
<accession>Q9FPJ6</accession>